<reference key="1">
    <citation type="journal article" date="2003" name="Science">
        <title>Human chromosome 7: DNA sequence and biology.</title>
        <authorList>
            <person name="Scherer S.W."/>
            <person name="Cheung J."/>
            <person name="MacDonald J.R."/>
            <person name="Osborne L.R."/>
            <person name="Nakabayashi K."/>
            <person name="Herbrick J.-A."/>
            <person name="Carson A.R."/>
            <person name="Parker-Katiraee L."/>
            <person name="Skaug J."/>
            <person name="Khaja R."/>
            <person name="Zhang J."/>
            <person name="Hudek A.K."/>
            <person name="Li M."/>
            <person name="Haddad M."/>
            <person name="Duggan G.E."/>
            <person name="Fernandez B.A."/>
            <person name="Kanematsu E."/>
            <person name="Gentles S."/>
            <person name="Christopoulos C.C."/>
            <person name="Choufani S."/>
            <person name="Kwasnicka D."/>
            <person name="Zheng X.H."/>
            <person name="Lai Z."/>
            <person name="Nusskern D.R."/>
            <person name="Zhang Q."/>
            <person name="Gu Z."/>
            <person name="Lu F."/>
            <person name="Zeesman S."/>
            <person name="Nowaczyk M.J."/>
            <person name="Teshima I."/>
            <person name="Chitayat D."/>
            <person name="Shuman C."/>
            <person name="Weksberg R."/>
            <person name="Zackai E.H."/>
            <person name="Grebe T.A."/>
            <person name="Cox S.R."/>
            <person name="Kirkpatrick S.J."/>
            <person name="Rahman N."/>
            <person name="Friedman J.M."/>
            <person name="Heng H.H.Q."/>
            <person name="Pelicci P.G."/>
            <person name="Lo-Coco F."/>
            <person name="Belloni E."/>
            <person name="Shaffer L.G."/>
            <person name="Pober B."/>
            <person name="Morton C.C."/>
            <person name="Gusella J.F."/>
            <person name="Bruns G.A.P."/>
            <person name="Korf B.R."/>
            <person name="Quade B.J."/>
            <person name="Ligon A.H."/>
            <person name="Ferguson H."/>
            <person name="Higgins A.W."/>
            <person name="Leach N.T."/>
            <person name="Herrick S.R."/>
            <person name="Lemyre E."/>
            <person name="Farra C.G."/>
            <person name="Kim H.-G."/>
            <person name="Summers A.M."/>
            <person name="Gripp K.W."/>
            <person name="Roberts W."/>
            <person name="Szatmari P."/>
            <person name="Winsor E.J.T."/>
            <person name="Grzeschik K.-H."/>
            <person name="Teebi A."/>
            <person name="Minassian B.A."/>
            <person name="Kere J."/>
            <person name="Armengol L."/>
            <person name="Pujana M.A."/>
            <person name="Estivill X."/>
            <person name="Wilson M.D."/>
            <person name="Koop B.F."/>
            <person name="Tosi S."/>
            <person name="Moore G.E."/>
            <person name="Boright A.P."/>
            <person name="Zlotorynski E."/>
            <person name="Kerem B."/>
            <person name="Kroisel P.M."/>
            <person name="Petek E."/>
            <person name="Oscier D.G."/>
            <person name="Mould S.J."/>
            <person name="Doehner H."/>
            <person name="Doehner K."/>
            <person name="Rommens J.M."/>
            <person name="Vincent J.B."/>
            <person name="Venter J.C."/>
            <person name="Li P.W."/>
            <person name="Mural R.J."/>
            <person name="Adams M.D."/>
            <person name="Tsui L.-C."/>
        </authorList>
    </citation>
    <scope>NUCLEOTIDE SEQUENCE [LARGE SCALE GENOMIC DNA]</scope>
</reference>
<reference key="2">
    <citation type="submission" date="2005-07" db="EMBL/GenBank/DDBJ databases">
        <authorList>
            <person name="Mural R.J."/>
            <person name="Istrail S."/>
            <person name="Sutton G.G."/>
            <person name="Florea L."/>
            <person name="Halpern A.L."/>
            <person name="Mobarry C.M."/>
            <person name="Lippert R."/>
            <person name="Walenz B."/>
            <person name="Shatkay H."/>
            <person name="Dew I."/>
            <person name="Miller J.R."/>
            <person name="Flanigan M.J."/>
            <person name="Edwards N.J."/>
            <person name="Bolanos R."/>
            <person name="Fasulo D."/>
            <person name="Halldorsson B.V."/>
            <person name="Hannenhalli S."/>
            <person name="Turner R."/>
            <person name="Yooseph S."/>
            <person name="Lu F."/>
            <person name="Nusskern D.R."/>
            <person name="Shue B.C."/>
            <person name="Zheng X.H."/>
            <person name="Zhong F."/>
            <person name="Delcher A.L."/>
            <person name="Huson D.H."/>
            <person name="Kravitz S.A."/>
            <person name="Mouchard L."/>
            <person name="Reinert K."/>
            <person name="Remington K.A."/>
            <person name="Clark A.G."/>
            <person name="Waterman M.S."/>
            <person name="Eichler E.E."/>
            <person name="Adams M.D."/>
            <person name="Hunkapiller M.W."/>
            <person name="Myers E.W."/>
            <person name="Venter J.C."/>
        </authorList>
    </citation>
    <scope>NUCLEOTIDE SEQUENCE [LARGE SCALE GENOMIC DNA]</scope>
</reference>
<reference key="3">
    <citation type="journal article" date="2004" name="Genome Res.">
        <title>The status, quality, and expansion of the NIH full-length cDNA project: the Mammalian Gene Collection (MGC).</title>
        <authorList>
            <consortium name="The MGC Project Team"/>
        </authorList>
    </citation>
    <scope>NUCLEOTIDE SEQUENCE [LARGE SCALE MRNA]</scope>
    <source>
        <tissue>Cervix</tissue>
        <tissue>Testis</tissue>
    </source>
</reference>
<reference key="4">
    <citation type="journal article" date="2003" name="Immunogenetics">
        <title>Two genes, three messengers: hybrid transcript between a gene expressed at specific stages of T-cell and sperm maturation and an unrelated adjacent gene.</title>
        <authorList>
            <person name="Miazek A."/>
            <person name="Malissen B."/>
        </authorList>
    </citation>
    <scope>TISSUE SPECIFICITY</scope>
</reference>
<reference key="5">
    <citation type="journal article" date="2006" name="Cell">
        <title>Global, in vivo, and site-specific phosphorylation dynamics in signaling networks.</title>
        <authorList>
            <person name="Olsen J.V."/>
            <person name="Blagoev B."/>
            <person name="Gnad F."/>
            <person name="Macek B."/>
            <person name="Kumar C."/>
            <person name="Mortensen P."/>
            <person name="Mann M."/>
        </authorList>
    </citation>
    <scope>IDENTIFICATION BY MASS SPECTROMETRY [LARGE SCALE ANALYSIS]</scope>
    <source>
        <tissue>Cervix carcinoma</tissue>
    </source>
</reference>
<reference key="6">
    <citation type="journal article" date="2008" name="J. Proteome Res.">
        <title>Combining protein-based IMAC, peptide-based IMAC, and MudPIT for efficient phosphoproteomic analysis.</title>
        <authorList>
            <person name="Cantin G.T."/>
            <person name="Yi W."/>
            <person name="Lu B."/>
            <person name="Park S.K."/>
            <person name="Xu T."/>
            <person name="Lee J.-D."/>
            <person name="Yates J.R. III"/>
        </authorList>
    </citation>
    <scope>IDENTIFICATION BY MASS SPECTROMETRY [LARGE SCALE ANALYSIS]</scope>
    <source>
        <tissue>Cervix carcinoma</tissue>
    </source>
</reference>
<reference key="7">
    <citation type="journal article" date="2008" name="Mol. Cell">
        <title>Kinase-selective enrichment enables quantitative phosphoproteomics of the kinome across the cell cycle.</title>
        <authorList>
            <person name="Daub H."/>
            <person name="Olsen J.V."/>
            <person name="Bairlein M."/>
            <person name="Gnad F."/>
            <person name="Oppermann F.S."/>
            <person name="Korner R."/>
            <person name="Greff Z."/>
            <person name="Keri G."/>
            <person name="Stemmann O."/>
            <person name="Mann M."/>
        </authorList>
    </citation>
    <scope>PHOSPHORYLATION [LARGE SCALE ANALYSIS] AT SER-303 AND SER-345</scope>
    <scope>IDENTIFICATION BY MASS SPECTROMETRY [LARGE SCALE ANALYSIS]</scope>
    <source>
        <tissue>Cervix carcinoma</tissue>
    </source>
</reference>
<reference key="8">
    <citation type="journal article" date="2008" name="Proc. Natl. Acad. Sci. U.S.A.">
        <title>A quantitative atlas of mitotic phosphorylation.</title>
        <authorList>
            <person name="Dephoure N."/>
            <person name="Zhou C."/>
            <person name="Villen J."/>
            <person name="Beausoleil S.A."/>
            <person name="Bakalarski C.E."/>
            <person name="Elledge S.J."/>
            <person name="Gygi S.P."/>
        </authorList>
    </citation>
    <scope>PHOSPHORYLATION [LARGE SCALE ANALYSIS] AT SER-105; SER-108; SER-172; THR-175 AND SER-345</scope>
    <scope>IDENTIFICATION BY MASS SPECTROMETRY [LARGE SCALE ANALYSIS]</scope>
    <source>
        <tissue>Cervix carcinoma</tissue>
    </source>
</reference>
<reference key="9">
    <citation type="journal article" date="2009" name="Anal. Chem.">
        <title>Lys-N and trypsin cover complementary parts of the phosphoproteome in a refined SCX-based approach.</title>
        <authorList>
            <person name="Gauci S."/>
            <person name="Helbig A.O."/>
            <person name="Slijper M."/>
            <person name="Krijgsveld J."/>
            <person name="Heck A.J."/>
            <person name="Mohammed S."/>
        </authorList>
    </citation>
    <scope>IDENTIFICATION BY MASS SPECTROMETRY [LARGE SCALE ANALYSIS]</scope>
</reference>
<reference key="10">
    <citation type="journal article" date="2009" name="Sci. Signal.">
        <title>Quantitative phosphoproteomic analysis of T cell receptor signaling reveals system-wide modulation of protein-protein interactions.</title>
        <authorList>
            <person name="Mayya V."/>
            <person name="Lundgren D.H."/>
            <person name="Hwang S.-I."/>
            <person name="Rezaul K."/>
            <person name="Wu L."/>
            <person name="Eng J.K."/>
            <person name="Rodionov V."/>
            <person name="Han D.K."/>
        </authorList>
    </citation>
    <scope>PHOSPHORYLATION [LARGE SCALE ANALYSIS] AT THR-177</scope>
    <scope>IDENTIFICATION BY MASS SPECTROMETRY [LARGE SCALE ANALYSIS]</scope>
    <source>
        <tissue>Leukemic T-cell</tissue>
    </source>
</reference>
<reference key="11">
    <citation type="journal article" date="2010" name="Sci. Signal.">
        <title>Quantitative phosphoproteomics reveals widespread full phosphorylation site occupancy during mitosis.</title>
        <authorList>
            <person name="Olsen J.V."/>
            <person name="Vermeulen M."/>
            <person name="Santamaria A."/>
            <person name="Kumar C."/>
            <person name="Miller M.L."/>
            <person name="Jensen L.J."/>
            <person name="Gnad F."/>
            <person name="Cox J."/>
            <person name="Jensen T.S."/>
            <person name="Nigg E.A."/>
            <person name="Brunak S."/>
            <person name="Mann M."/>
        </authorList>
    </citation>
    <scope>PHOSPHORYLATION [LARGE SCALE ANALYSIS] AT SER-223; SER-258; SER-398 AND SER-480</scope>
    <scope>IDENTIFICATION BY MASS SPECTROMETRY [LARGE SCALE ANALYSIS]</scope>
    <source>
        <tissue>Cervix carcinoma</tissue>
    </source>
</reference>
<reference key="12">
    <citation type="journal article" date="2011" name="N. Engl. J. Med.">
        <title>Genomewide association between GLCCI1 and response to glucocorticoid therapy in asthma.</title>
        <authorList>
            <person name="Tantisira K.G."/>
            <person name="Lasky-Su J."/>
            <person name="Harada M."/>
            <person name="Murphy A."/>
            <person name="Litonjua A.A."/>
            <person name="Himes B.E."/>
            <person name="Lange C."/>
            <person name="Lazarus R."/>
            <person name="Sylvia J."/>
            <person name="Klanderman B."/>
            <person name="Duan Q.L."/>
            <person name="Qiu W."/>
            <person name="Hirota T."/>
            <person name="Martinez F.D."/>
            <person name="Mauger D."/>
            <person name="Sorkness C."/>
            <person name="Szefler S."/>
            <person name="Lazarus S.C."/>
            <person name="Lemanske R.F. Jr."/>
            <person name="Peters S.P."/>
            <person name="Lima J.J."/>
            <person name="Nakamura Y."/>
            <person name="Tamari M."/>
            <person name="Weiss S.T."/>
        </authorList>
    </citation>
    <scope>INVOLVEMENT IN ASTHMA RESPONSE TO GLUCOCORTICOID TREATMENT</scope>
    <scope>TISSUE SPECIFICITY</scope>
</reference>
<reference key="13">
    <citation type="journal article" date="2011" name="N. Engl. J. Med.">
        <title>Genetics of glucocorticoids in asthma.</title>
        <authorList>
            <person name="Van den Berge M."/>
            <person name="Hiemstra P.S."/>
            <person name="Postma D.S."/>
        </authorList>
    </citation>
    <scope>INVOLVEMENT IN CHRONIC OBSTRUCTIVE PULMONARY DISEASE RESPONSE TO GLUCOCORTICOID TREATMENT</scope>
</reference>
<reference key="14">
    <citation type="journal article" date="2011" name="Sci. Signal.">
        <title>System-wide temporal characterization of the proteome and phosphoproteome of human embryonic stem cell differentiation.</title>
        <authorList>
            <person name="Rigbolt K.T."/>
            <person name="Prokhorova T.A."/>
            <person name="Akimov V."/>
            <person name="Henningsen J."/>
            <person name="Johansen P.T."/>
            <person name="Kratchmarova I."/>
            <person name="Kassem M."/>
            <person name="Mann M."/>
            <person name="Olsen J.V."/>
            <person name="Blagoev B."/>
        </authorList>
    </citation>
    <scope>PHOSPHORYLATION [LARGE SCALE ANALYSIS] AT SER-223; SER-258 AND SER-398</scope>
    <scope>IDENTIFICATION BY MASS SPECTROMETRY [LARGE SCALE ANALYSIS]</scope>
</reference>
<reference key="15">
    <citation type="journal article" date="2013" name="J. Proteome Res.">
        <title>Toward a comprehensive characterization of a human cancer cell phosphoproteome.</title>
        <authorList>
            <person name="Zhou H."/>
            <person name="Di Palma S."/>
            <person name="Preisinger C."/>
            <person name="Peng M."/>
            <person name="Polat A.N."/>
            <person name="Heck A.J."/>
            <person name="Mohammed S."/>
        </authorList>
    </citation>
    <scope>PHOSPHORYLATION [LARGE SCALE ANALYSIS] AT SER-20; SER-79; SER-105; SER-108; SER-171; SER-172; SER-258; SER-303; THR-343; SER-345 AND SER-406</scope>
    <scope>IDENTIFICATION BY MASS SPECTROMETRY [LARGE SCALE ANALYSIS]</scope>
    <source>
        <tissue>Cervix carcinoma</tissue>
        <tissue>Erythroleukemia</tissue>
    </source>
</reference>
<reference key="16">
    <citation type="journal article" date="2014" name="J. Proteomics">
        <title>An enzyme assisted RP-RPLC approach for in-depth analysis of human liver phosphoproteome.</title>
        <authorList>
            <person name="Bian Y."/>
            <person name="Song C."/>
            <person name="Cheng K."/>
            <person name="Dong M."/>
            <person name="Wang F."/>
            <person name="Huang J."/>
            <person name="Sun D."/>
            <person name="Wang L."/>
            <person name="Ye M."/>
            <person name="Zou H."/>
        </authorList>
    </citation>
    <scope>PHOSPHORYLATION [LARGE SCALE ANALYSIS] AT THR-266 AND SER-345</scope>
    <scope>IDENTIFICATION BY MASS SPECTROMETRY [LARGE SCALE ANALYSIS]</scope>
    <source>
        <tissue>Liver</tissue>
    </source>
</reference>
<protein>
    <recommendedName>
        <fullName>Glucocorticoid-induced transcript 1 protein</fullName>
    </recommendedName>
</protein>
<name>GLCI1_HUMAN</name>
<feature type="chain" id="PRO_0000256128" description="Glucocorticoid-induced transcript 1 protein">
    <location>
        <begin position="1"/>
        <end position="547"/>
    </location>
</feature>
<feature type="region of interest" description="Disordered" evidence="3">
    <location>
        <begin position="1"/>
        <end position="55"/>
    </location>
</feature>
<feature type="region of interest" description="Disordered" evidence="3">
    <location>
        <begin position="72"/>
        <end position="285"/>
    </location>
</feature>
<feature type="region of interest" description="Disordered" evidence="3">
    <location>
        <begin position="319"/>
        <end position="417"/>
    </location>
</feature>
<feature type="region of interest" description="Disordered" evidence="3">
    <location>
        <begin position="505"/>
        <end position="530"/>
    </location>
</feature>
<feature type="coiled-coil region" evidence="2">
    <location>
        <begin position="225"/>
        <end position="254"/>
    </location>
</feature>
<feature type="compositionally biased region" description="Low complexity" evidence="3">
    <location>
        <begin position="1"/>
        <end position="13"/>
    </location>
</feature>
<feature type="compositionally biased region" description="Low complexity" evidence="3">
    <location>
        <begin position="26"/>
        <end position="38"/>
    </location>
</feature>
<feature type="compositionally biased region" description="Gly residues" evidence="3">
    <location>
        <begin position="39"/>
        <end position="50"/>
    </location>
</feature>
<feature type="compositionally biased region" description="Low complexity" evidence="3">
    <location>
        <begin position="86"/>
        <end position="105"/>
    </location>
</feature>
<feature type="compositionally biased region" description="Basic and acidic residues" evidence="3">
    <location>
        <begin position="130"/>
        <end position="145"/>
    </location>
</feature>
<feature type="compositionally biased region" description="Low complexity" evidence="3">
    <location>
        <begin position="162"/>
        <end position="177"/>
    </location>
</feature>
<feature type="compositionally biased region" description="Basic and acidic residues" evidence="3">
    <location>
        <begin position="187"/>
        <end position="201"/>
    </location>
</feature>
<feature type="compositionally biased region" description="Low complexity" evidence="3">
    <location>
        <begin position="236"/>
        <end position="245"/>
    </location>
</feature>
<feature type="compositionally biased region" description="Polar residues" evidence="3">
    <location>
        <begin position="265"/>
        <end position="276"/>
    </location>
</feature>
<feature type="compositionally biased region" description="Basic and acidic residues" evidence="3">
    <location>
        <begin position="319"/>
        <end position="331"/>
    </location>
</feature>
<feature type="compositionally biased region" description="Polar residues" evidence="3">
    <location>
        <begin position="339"/>
        <end position="356"/>
    </location>
</feature>
<feature type="compositionally biased region" description="Low complexity" evidence="3">
    <location>
        <begin position="357"/>
        <end position="369"/>
    </location>
</feature>
<feature type="compositionally biased region" description="Polar residues" evidence="3">
    <location>
        <begin position="505"/>
        <end position="520"/>
    </location>
</feature>
<feature type="compositionally biased region" description="Low complexity" evidence="3">
    <location>
        <begin position="521"/>
        <end position="530"/>
    </location>
</feature>
<feature type="modified residue" description="Phosphoserine" evidence="12">
    <location>
        <position position="20"/>
    </location>
</feature>
<feature type="modified residue" description="Phosphoserine" evidence="12">
    <location>
        <position position="79"/>
    </location>
</feature>
<feature type="modified residue" description="Phosphoserine" evidence="7 12">
    <location>
        <position position="105"/>
    </location>
</feature>
<feature type="modified residue" description="Phosphoserine" evidence="1">
    <location>
        <position position="107"/>
    </location>
</feature>
<feature type="modified residue" description="Phosphoserine" evidence="7 12">
    <location>
        <position position="108"/>
    </location>
</feature>
<feature type="modified residue" description="Phosphothreonine" evidence="1">
    <location>
        <position position="110"/>
    </location>
</feature>
<feature type="modified residue" description="Phosphoserine" evidence="12">
    <location>
        <position position="171"/>
    </location>
</feature>
<feature type="modified residue" description="Phosphoserine" evidence="7 12">
    <location>
        <position position="172"/>
    </location>
</feature>
<feature type="modified residue" description="Phosphothreonine" evidence="7">
    <location>
        <position position="175"/>
    </location>
</feature>
<feature type="modified residue" description="Phosphothreonine" evidence="9">
    <location>
        <position position="177"/>
    </location>
</feature>
<feature type="modified residue" description="Phosphoserine" evidence="10 11">
    <location>
        <position position="223"/>
    </location>
</feature>
<feature type="modified residue" description="Phosphoserine" evidence="10 11 12">
    <location>
        <position position="258"/>
    </location>
</feature>
<feature type="modified residue" description="Phosphothreonine" evidence="13">
    <location>
        <position position="266"/>
    </location>
</feature>
<feature type="modified residue" description="Phosphoserine" evidence="8 12">
    <location>
        <position position="303"/>
    </location>
</feature>
<feature type="modified residue" description="Phosphothreonine" evidence="12">
    <location>
        <position position="343"/>
    </location>
</feature>
<feature type="modified residue" description="Phosphoserine" evidence="7 8 12 13">
    <location>
        <position position="345"/>
    </location>
</feature>
<feature type="modified residue" description="Phosphothreonine" evidence="1">
    <location>
        <position position="350"/>
    </location>
</feature>
<feature type="modified residue" description="Phosphoserine" evidence="1">
    <location>
        <position position="394"/>
    </location>
</feature>
<feature type="modified residue" description="Phosphoserine" evidence="10 11">
    <location>
        <position position="398"/>
    </location>
</feature>
<feature type="modified residue" description="Phosphoserine" evidence="12">
    <location>
        <position position="406"/>
    </location>
</feature>
<feature type="modified residue" description="Phosphoserine" evidence="1">
    <location>
        <position position="412"/>
    </location>
</feature>
<feature type="modified residue" description="Phosphoserine" evidence="10">
    <location>
        <position position="480"/>
    </location>
</feature>
<evidence type="ECO:0000250" key="1">
    <source>
        <dbReference type="UniProtKB" id="Q8K3I9"/>
    </source>
</evidence>
<evidence type="ECO:0000255" key="2"/>
<evidence type="ECO:0000256" key="3">
    <source>
        <dbReference type="SAM" id="MobiDB-lite"/>
    </source>
</evidence>
<evidence type="ECO:0000269" key="4">
    <source>
    </source>
</evidence>
<evidence type="ECO:0000269" key="5">
    <source>
    </source>
</evidence>
<evidence type="ECO:0000269" key="6">
    <source>
    </source>
</evidence>
<evidence type="ECO:0007744" key="7">
    <source>
    </source>
</evidence>
<evidence type="ECO:0007744" key="8">
    <source>
    </source>
</evidence>
<evidence type="ECO:0007744" key="9">
    <source>
    </source>
</evidence>
<evidence type="ECO:0007744" key="10">
    <source>
    </source>
</evidence>
<evidence type="ECO:0007744" key="11">
    <source>
    </source>
</evidence>
<evidence type="ECO:0007744" key="12">
    <source>
    </source>
</evidence>
<evidence type="ECO:0007744" key="13">
    <source>
    </source>
</evidence>
<comment type="interaction">
    <interactant intactId="EBI-2556215">
        <id>Q86VQ1</id>
    </interactant>
    <interactant intactId="EBI-725997">
        <id>Q8WV44</id>
        <label>TRIM41</label>
    </interactant>
    <organismsDiffer>false</organismsDiffer>
    <experiments>2</experiments>
</comment>
<comment type="tissue specificity">
    <text evidence="4 5">Predominantly expressed in lung, spleen, thymus and testis and, at lower levels, in brain, bone marrow, peripheral leukocytes, skin and trachea.</text>
</comment>
<comment type="polymorphism">
    <text evidence="5 6">Polymorphisms dbSNP:rs37972 and dbSNP:rs37973, located in GLCCI1 promoter region, are associated with a decreased response to glucorticoid treatment [MIM:614400] in asthma patients (PubMed:21991891), as well as in chronic obstructive pulmonary disease patients (PubMed:22187997). The mean increase in forced expiratory volume in 1 second in glucorticoid treated subjects who are homozygous for the mutant (G) rs37973 allele is only about one-third of that seen in similarly treated subjects who are homozygous for the wild-type allele (A) (PubMed:21991891). These polymorphisms affect GLCCI1 transcription level.</text>
</comment>
<sequence>MSTASSSSSSSSSQTPHPPSQRMRRSAAGSPPAVAAAGSGNGAGGGGGVGCAPAAGAGRLLQPIRATVPYQLLRGSQHSPTRPPVAAAAASLGSLPGPGAARGPSPSSPTPPAAAAPAEQAPRAKGRPRRSPESHRRSSSPERRSPGSPVCRADKAKSQQVRTSSTIRRTSSLDTITGPYLTGQWPRDPHVHYPSCMKDKATQTPSCWAEEGAEKRSHQRSASWGSADQLKEQIAKLRQQLQRSKQSSRHSKEKDRQSPLHGNHITISHTQATGSRSVPMPLSNISVPKSSVSRVPCNVEGISPELEKVFIKENNGKEEVSKPLDIPDGRRAPLPAHYRSSSTRSIDTQTPSVQERSSSCSSHSPCVSPFCPPESQDGSPCSTEDLLYDRDKDSGSSSPLPKYASSPKPNNSYMFKREPPEGCERVKVFEEMASRQPISAPLFSCPDKNKVNFIPTGSAFCPVKLLGPLLPASDLMLKNSPNSGQSSALATLTVEQLSSRVSFTSLSDDTSTAGSMEASVQQPSQQQQLLQELQGEDHISAQNYVII</sequence>
<proteinExistence type="evidence at protein level"/>
<organism>
    <name type="scientific">Homo sapiens</name>
    <name type="common">Human</name>
    <dbReference type="NCBI Taxonomy" id="9606"/>
    <lineage>
        <taxon>Eukaryota</taxon>
        <taxon>Metazoa</taxon>
        <taxon>Chordata</taxon>
        <taxon>Craniata</taxon>
        <taxon>Vertebrata</taxon>
        <taxon>Euteleostomi</taxon>
        <taxon>Mammalia</taxon>
        <taxon>Eutheria</taxon>
        <taxon>Euarchontoglires</taxon>
        <taxon>Primates</taxon>
        <taxon>Haplorrhini</taxon>
        <taxon>Catarrhini</taxon>
        <taxon>Hominidae</taxon>
        <taxon>Homo</taxon>
    </lineage>
</organism>
<keyword id="KW-0175">Coiled coil</keyword>
<keyword id="KW-0597">Phosphoprotein</keyword>
<keyword id="KW-1267">Proteomics identification</keyword>
<keyword id="KW-1185">Reference proteome</keyword>
<dbReference type="EMBL" id="CH236948">
    <property type="protein sequence ID" value="EAL24302.1"/>
    <property type="molecule type" value="Genomic_DNA"/>
</dbReference>
<dbReference type="EMBL" id="CH471073">
    <property type="protein sequence ID" value="EAW93607.1"/>
    <property type="molecule type" value="Genomic_DNA"/>
</dbReference>
<dbReference type="EMBL" id="BC011254">
    <property type="protein sequence ID" value="AAH11254.1"/>
    <property type="molecule type" value="mRNA"/>
</dbReference>
<dbReference type="EMBL" id="BC050291">
    <property type="protein sequence ID" value="AAH50291.1"/>
    <property type="molecule type" value="mRNA"/>
</dbReference>
<dbReference type="CCDS" id="CCDS34601.1"/>
<dbReference type="RefSeq" id="NP_612435.1">
    <property type="nucleotide sequence ID" value="NM_138426.4"/>
</dbReference>
<dbReference type="SMR" id="Q86VQ1"/>
<dbReference type="BioGRID" id="125239">
    <property type="interactions" value="25"/>
</dbReference>
<dbReference type="FunCoup" id="Q86VQ1">
    <property type="interactions" value="1252"/>
</dbReference>
<dbReference type="IntAct" id="Q86VQ1">
    <property type="interactions" value="19"/>
</dbReference>
<dbReference type="MINT" id="Q86VQ1"/>
<dbReference type="STRING" id="9606.ENSP00000223145"/>
<dbReference type="GlyGen" id="Q86VQ1">
    <property type="glycosylation" value="3 sites, 1 N-linked glycan (1 site), 1 O-linked glycan (1 site)"/>
</dbReference>
<dbReference type="iPTMnet" id="Q86VQ1"/>
<dbReference type="PhosphoSitePlus" id="Q86VQ1"/>
<dbReference type="BioMuta" id="GLCCI1"/>
<dbReference type="DMDM" id="74727602"/>
<dbReference type="jPOST" id="Q86VQ1"/>
<dbReference type="MassIVE" id="Q86VQ1"/>
<dbReference type="PaxDb" id="9606-ENSP00000223145"/>
<dbReference type="PeptideAtlas" id="Q86VQ1"/>
<dbReference type="ProteomicsDB" id="70055"/>
<dbReference type="Pumba" id="Q86VQ1"/>
<dbReference type="Antibodypedia" id="945">
    <property type="antibodies" value="180 antibodies from 21 providers"/>
</dbReference>
<dbReference type="DNASU" id="113263"/>
<dbReference type="Ensembl" id="ENST00000223145.10">
    <property type="protein sequence ID" value="ENSP00000223145.5"/>
    <property type="gene ID" value="ENSG00000106415.13"/>
</dbReference>
<dbReference type="GeneID" id="113263"/>
<dbReference type="KEGG" id="hsa:113263"/>
<dbReference type="MANE-Select" id="ENST00000223145.10">
    <property type="protein sequence ID" value="ENSP00000223145.5"/>
    <property type="RefSeq nucleotide sequence ID" value="NM_138426.4"/>
    <property type="RefSeq protein sequence ID" value="NP_612435.1"/>
</dbReference>
<dbReference type="UCSC" id="uc003srk.5">
    <property type="organism name" value="human"/>
</dbReference>
<dbReference type="AGR" id="HGNC:18713"/>
<dbReference type="CTD" id="113263"/>
<dbReference type="DisGeNET" id="113263"/>
<dbReference type="GeneCards" id="GLCCI1"/>
<dbReference type="HGNC" id="HGNC:18713">
    <property type="gene designation" value="GLCCI1"/>
</dbReference>
<dbReference type="HPA" id="ENSG00000106415">
    <property type="expression patterns" value="Tissue enhanced (lymphoid)"/>
</dbReference>
<dbReference type="MalaCards" id="GLCCI1"/>
<dbReference type="MIM" id="614283">
    <property type="type" value="gene"/>
</dbReference>
<dbReference type="MIM" id="614400">
    <property type="type" value="phenotype"/>
</dbReference>
<dbReference type="neXtProt" id="NX_Q86VQ1"/>
<dbReference type="OpenTargets" id="ENSG00000106415"/>
<dbReference type="PharmGKB" id="PA38657"/>
<dbReference type="VEuPathDB" id="HostDB:ENSG00000106415"/>
<dbReference type="eggNOG" id="ENOG502QRQF">
    <property type="taxonomic scope" value="Eukaryota"/>
</dbReference>
<dbReference type="GeneTree" id="ENSGT00950000183046"/>
<dbReference type="HOGENOM" id="CLU_033432_3_1_1"/>
<dbReference type="InParanoid" id="Q86VQ1"/>
<dbReference type="OMA" id="ISAHNYV"/>
<dbReference type="OrthoDB" id="10037581at2759"/>
<dbReference type="PAN-GO" id="Q86VQ1">
    <property type="GO annotations" value="1 GO annotation based on evolutionary models"/>
</dbReference>
<dbReference type="PhylomeDB" id="Q86VQ1"/>
<dbReference type="TreeFam" id="TF333159"/>
<dbReference type="PathwayCommons" id="Q86VQ1"/>
<dbReference type="SignaLink" id="Q86VQ1"/>
<dbReference type="BioGRID-ORCS" id="113263">
    <property type="hits" value="15 hits in 1155 CRISPR screens"/>
</dbReference>
<dbReference type="ChiTaRS" id="GLCCI1">
    <property type="organism name" value="human"/>
</dbReference>
<dbReference type="GeneWiki" id="GLCCI1"/>
<dbReference type="GenomeRNAi" id="113263"/>
<dbReference type="Pharos" id="Q86VQ1">
    <property type="development level" value="Tbio"/>
</dbReference>
<dbReference type="PRO" id="PR:Q86VQ1"/>
<dbReference type="Proteomes" id="UP000005640">
    <property type="component" value="Chromosome 7"/>
</dbReference>
<dbReference type="RNAct" id="Q86VQ1">
    <property type="molecule type" value="protein"/>
</dbReference>
<dbReference type="Bgee" id="ENSG00000106415">
    <property type="expression patterns" value="Expressed in thymus and 189 other cell types or tissues"/>
</dbReference>
<dbReference type="ExpressionAtlas" id="Q86VQ1">
    <property type="expression patterns" value="baseline and differential"/>
</dbReference>
<dbReference type="GO" id="GO:0005737">
    <property type="term" value="C:cytoplasm"/>
    <property type="evidence" value="ECO:0000318"/>
    <property type="project" value="GO_Central"/>
</dbReference>
<dbReference type="InterPro" id="IPR026642">
    <property type="entry name" value="Glcci1/FAM117"/>
</dbReference>
<dbReference type="PANTHER" id="PTHR14972">
    <property type="entry name" value="AGAP011572-PA"/>
    <property type="match status" value="1"/>
</dbReference>
<dbReference type="PANTHER" id="PTHR14972:SF3">
    <property type="entry name" value="GLUCOCORTICOID-INDUCED TRANSCRIPT 1 PROTEIN"/>
    <property type="match status" value="1"/>
</dbReference>
<dbReference type="Pfam" id="PF15388">
    <property type="entry name" value="FAM117"/>
    <property type="match status" value="1"/>
</dbReference>
<accession>Q86VQ1</accession>
<accession>A4D103</accession>
<accession>Q96FD0</accession>
<gene>
    <name type="primary">GLCCI1</name>
</gene>